<evidence type="ECO:0000255" key="1">
    <source>
        <dbReference type="HAMAP-Rule" id="MF_01449"/>
    </source>
</evidence>
<keyword id="KW-0010">Activator</keyword>
<keyword id="KW-0238">DNA-binding</keyword>
<keyword id="KW-0678">Repressor</keyword>
<keyword id="KW-0804">Transcription</keyword>
<keyword id="KW-0805">Transcription regulation</keyword>
<feature type="chain" id="PRO_0000309261" description="HTH-type transcriptional regulator SgrR">
    <location>
        <begin position="1"/>
        <end position="553"/>
    </location>
</feature>
<feature type="domain" description="HTH marR-type" evidence="1">
    <location>
        <begin position="1"/>
        <end position="113"/>
    </location>
</feature>
<feature type="DNA-binding region" description="H-T-H motif" evidence="1">
    <location>
        <begin position="26"/>
        <end position="49"/>
    </location>
</feature>
<feature type="region of interest" description="Solute-binding" evidence="1">
    <location>
        <begin position="163"/>
        <end position="494"/>
    </location>
</feature>
<gene>
    <name evidence="1" type="primary">sgrR</name>
    <name type="ordered locus">YPTB0667</name>
</gene>
<comment type="function">
    <text evidence="1">Activates the small RNA gene sgrS under glucose-phosphate stress conditions as well as yfdZ. Represses its own transcription under both stress and non-stress conditions. Might act as a sensor of the intracellular accumulation of phosphoglucose by binding these molecules in its C-terminal solute-binding domain.</text>
</comment>
<sequence>MSTSRLQQQFIRLWQRYNGQSTETTLQALAEVLNCSRRHVRSLLGKMQHAGWLDWQAEAGRGKRSQLIFLRSGLALQQQRAEELLEQDHIDQLVQLVGDKKAVRQMLLSQLGRSFRQGKHILRVLYYRPLENLLPGTALRRSETHMVRQIFNGLTRINEENGELEPDLSHHWQAITPLHWRFYLRPAIHFHHGRELEMSDVISSLTRLIPQPLFSHIAEVRSPTPYVIDVYLHSPDHWLPWLLGSVHAMILPQEWETQPDFHRQPIGTGPYSVIRNHHSQLKIQAFDNYFGFRALIDEVNIWVLPELSEELVYSGVQLQADDTGKNELESRLEEGCYFLLFDQRSPQACTPEIRRWLCELITPIALLSHADPFYQRYWSPAYGMLPRWHHNRLTTQEPKPEGLNELTLTFYSEHSEFDAISQTLTQLLAAQGVTLKIQVLDYTRWYQGDAQSDIWLGSANFYLPLEFSLFATLYEMPLLQHCLSEELHQDIESWRNNTLLMADWSQRLVSQHQFHPLFHHWLELYGQHSMRGVRMNTLGWFDFKSAWFTPPEA</sequence>
<protein>
    <recommendedName>
        <fullName evidence="1">HTH-type transcriptional regulator SgrR</fullName>
    </recommendedName>
</protein>
<organism>
    <name type="scientific">Yersinia pseudotuberculosis serotype I (strain IP32953)</name>
    <dbReference type="NCBI Taxonomy" id="273123"/>
    <lineage>
        <taxon>Bacteria</taxon>
        <taxon>Pseudomonadati</taxon>
        <taxon>Pseudomonadota</taxon>
        <taxon>Gammaproteobacteria</taxon>
        <taxon>Enterobacterales</taxon>
        <taxon>Yersiniaceae</taxon>
        <taxon>Yersinia</taxon>
    </lineage>
</organism>
<proteinExistence type="inferred from homology"/>
<dbReference type="EMBL" id="BX936398">
    <property type="protein sequence ID" value="CAH19907.1"/>
    <property type="molecule type" value="Genomic_DNA"/>
</dbReference>
<dbReference type="RefSeq" id="WP_011191725.1">
    <property type="nucleotide sequence ID" value="NC_006155.1"/>
</dbReference>
<dbReference type="SMR" id="Q66EM6"/>
<dbReference type="GeneID" id="49787331"/>
<dbReference type="KEGG" id="ypo:BZ17_1890"/>
<dbReference type="KEGG" id="yps:YPTB0667"/>
<dbReference type="PATRIC" id="fig|273123.14.peg.2008"/>
<dbReference type="Proteomes" id="UP000001011">
    <property type="component" value="Chromosome"/>
</dbReference>
<dbReference type="GO" id="GO:0003677">
    <property type="term" value="F:DNA binding"/>
    <property type="evidence" value="ECO:0007669"/>
    <property type="project" value="UniProtKB-KW"/>
</dbReference>
<dbReference type="GO" id="GO:1904680">
    <property type="term" value="F:peptide transmembrane transporter activity"/>
    <property type="evidence" value="ECO:0007669"/>
    <property type="project" value="TreeGrafter"/>
</dbReference>
<dbReference type="GO" id="GO:0045892">
    <property type="term" value="P:negative regulation of DNA-templated transcription"/>
    <property type="evidence" value="ECO:0007669"/>
    <property type="project" value="UniProtKB-UniRule"/>
</dbReference>
<dbReference type="GO" id="GO:0015833">
    <property type="term" value="P:peptide transport"/>
    <property type="evidence" value="ECO:0007669"/>
    <property type="project" value="TreeGrafter"/>
</dbReference>
<dbReference type="GO" id="GO:0045893">
    <property type="term" value="P:positive regulation of DNA-templated transcription"/>
    <property type="evidence" value="ECO:0007669"/>
    <property type="project" value="UniProtKB-UniRule"/>
</dbReference>
<dbReference type="CDD" id="cd08507">
    <property type="entry name" value="PBP2_SgrR_like"/>
    <property type="match status" value="1"/>
</dbReference>
<dbReference type="FunFam" id="3.40.190.10:FF:000070">
    <property type="entry name" value="HTH-type transcriptional regulator SgrR"/>
    <property type="match status" value="1"/>
</dbReference>
<dbReference type="Gene3D" id="3.40.190.10">
    <property type="entry name" value="Periplasmic binding protein-like II"/>
    <property type="match status" value="1"/>
</dbReference>
<dbReference type="HAMAP" id="MF_01449">
    <property type="entry name" value="HTH_type_SgrR"/>
    <property type="match status" value="1"/>
</dbReference>
<dbReference type="InterPro" id="IPR039424">
    <property type="entry name" value="SBP_5"/>
</dbReference>
<dbReference type="InterPro" id="IPR000914">
    <property type="entry name" value="SBP_5_dom"/>
</dbReference>
<dbReference type="InterPro" id="IPR025370">
    <property type="entry name" value="SgrR_HTH_N"/>
</dbReference>
<dbReference type="InterPro" id="IPR023767">
    <property type="entry name" value="Tscrpt_reg_SgrR"/>
</dbReference>
<dbReference type="InterPro" id="IPR036390">
    <property type="entry name" value="WH_DNA-bd_sf"/>
</dbReference>
<dbReference type="NCBIfam" id="NF010149">
    <property type="entry name" value="PRK13626.1"/>
    <property type="match status" value="1"/>
</dbReference>
<dbReference type="PANTHER" id="PTHR30290:SF72">
    <property type="entry name" value="HTH-TYPE TRANSCRIPTIONAL REGULATOR SGRR"/>
    <property type="match status" value="1"/>
</dbReference>
<dbReference type="PANTHER" id="PTHR30290">
    <property type="entry name" value="PERIPLASMIC BINDING COMPONENT OF ABC TRANSPORTER"/>
    <property type="match status" value="1"/>
</dbReference>
<dbReference type="Pfam" id="PF00496">
    <property type="entry name" value="SBP_bac_5"/>
    <property type="match status" value="1"/>
</dbReference>
<dbReference type="Pfam" id="PF12793">
    <property type="entry name" value="SgrR_N"/>
    <property type="match status" value="1"/>
</dbReference>
<dbReference type="SUPFAM" id="SSF53850">
    <property type="entry name" value="Periplasmic binding protein-like II"/>
    <property type="match status" value="1"/>
</dbReference>
<dbReference type="SUPFAM" id="SSF46785">
    <property type="entry name" value="Winged helix' DNA-binding domain"/>
    <property type="match status" value="1"/>
</dbReference>
<reference key="1">
    <citation type="journal article" date="2004" name="Proc. Natl. Acad. Sci. U.S.A.">
        <title>Insights into the evolution of Yersinia pestis through whole-genome comparison with Yersinia pseudotuberculosis.</title>
        <authorList>
            <person name="Chain P.S.G."/>
            <person name="Carniel E."/>
            <person name="Larimer F.W."/>
            <person name="Lamerdin J."/>
            <person name="Stoutland P.O."/>
            <person name="Regala W.M."/>
            <person name="Georgescu A.M."/>
            <person name="Vergez L.M."/>
            <person name="Land M.L."/>
            <person name="Motin V.L."/>
            <person name="Brubaker R.R."/>
            <person name="Fowler J."/>
            <person name="Hinnebusch J."/>
            <person name="Marceau M."/>
            <person name="Medigue C."/>
            <person name="Simonet M."/>
            <person name="Chenal-Francisque V."/>
            <person name="Souza B."/>
            <person name="Dacheux D."/>
            <person name="Elliott J.M."/>
            <person name="Derbise A."/>
            <person name="Hauser L.J."/>
            <person name="Garcia E."/>
        </authorList>
    </citation>
    <scope>NUCLEOTIDE SEQUENCE [LARGE SCALE GENOMIC DNA]</scope>
    <source>
        <strain>IP32953</strain>
    </source>
</reference>
<accession>Q66EM6</accession>
<name>SGRR_YERPS</name>